<reference key="1">
    <citation type="journal article" date="2006" name="Appl. Environ. Microbiol.">
        <title>Genome sequence of the chemolithoautotrophic nitrite-oxidizing bacterium Nitrobacter winogradskyi Nb-255.</title>
        <authorList>
            <person name="Starkenburg S.R."/>
            <person name="Chain P.S.G."/>
            <person name="Sayavedra-Soto L.A."/>
            <person name="Hauser L."/>
            <person name="Land M.L."/>
            <person name="Larimer F.W."/>
            <person name="Malfatti S.A."/>
            <person name="Klotz M.G."/>
            <person name="Bottomley P.J."/>
            <person name="Arp D.J."/>
            <person name="Hickey W.J."/>
        </authorList>
    </citation>
    <scope>NUCLEOTIDE SEQUENCE [LARGE SCALE GENOMIC DNA]</scope>
    <source>
        <strain>ATCC 25391 / DSM 10237 / CIP 104748 / NCIMB 11846 / Nb-255</strain>
    </source>
</reference>
<name>TATB_NITWN</name>
<evidence type="ECO:0000255" key="1">
    <source>
        <dbReference type="HAMAP-Rule" id="MF_00237"/>
    </source>
</evidence>
<evidence type="ECO:0000256" key="2">
    <source>
        <dbReference type="SAM" id="MobiDB-lite"/>
    </source>
</evidence>
<protein>
    <recommendedName>
        <fullName evidence="1">Sec-independent protein translocase protein TatB</fullName>
    </recommendedName>
</protein>
<gene>
    <name evidence="1" type="primary">tatB</name>
    <name type="ordered locus">Nwi_1778</name>
</gene>
<sequence length="180" mass="18709">MFDIGWSELLVIGVVALIAIGPKELPGVLRTVGQWMGKARRMAAEFQGQFNEAMREAEMADLKKSFDEVRDATSGLTRGDLMTRLTDSLGEPPRLEDIDKPATGADKPSVSSDAASASGSAAPEAGAAETFTADAGTNASGPLAITPQAHQDATAVEPPEGAPEISREGRDQTARGAKAS</sequence>
<organism>
    <name type="scientific">Nitrobacter winogradskyi (strain ATCC 25391 / DSM 10237 / CIP 104748 / NCIMB 11846 / Nb-255)</name>
    <dbReference type="NCBI Taxonomy" id="323098"/>
    <lineage>
        <taxon>Bacteria</taxon>
        <taxon>Pseudomonadati</taxon>
        <taxon>Pseudomonadota</taxon>
        <taxon>Alphaproteobacteria</taxon>
        <taxon>Hyphomicrobiales</taxon>
        <taxon>Nitrobacteraceae</taxon>
        <taxon>Nitrobacter</taxon>
    </lineage>
</organism>
<comment type="function">
    <text evidence="1">Part of the twin-arginine translocation (Tat) system that transports large folded proteins containing a characteristic twin-arginine motif in their signal peptide across membranes. Together with TatC, TatB is part of a receptor directly interacting with Tat signal peptides. TatB may form an oligomeric binding site that transiently accommodates folded Tat precursor proteins before their translocation.</text>
</comment>
<comment type="subunit">
    <text evidence="1">The Tat system comprises two distinct complexes: a TatABC complex, containing multiple copies of TatA, TatB and TatC subunits, and a separate TatA complex, containing only TatA subunits. Substrates initially bind to the TatABC complex, which probably triggers association of the separate TatA complex to form the active translocon.</text>
</comment>
<comment type="subcellular location">
    <subcellularLocation>
        <location evidence="1">Cell inner membrane</location>
        <topology evidence="1">Single-pass membrane protein</topology>
    </subcellularLocation>
</comment>
<comment type="similarity">
    <text evidence="1">Belongs to the TatB family.</text>
</comment>
<proteinExistence type="inferred from homology"/>
<feature type="chain" id="PRO_0000301198" description="Sec-independent protein translocase protein TatB">
    <location>
        <begin position="1"/>
        <end position="180"/>
    </location>
</feature>
<feature type="transmembrane region" description="Helical" evidence="1">
    <location>
        <begin position="1"/>
        <end position="21"/>
    </location>
</feature>
<feature type="region of interest" description="Disordered" evidence="2">
    <location>
        <begin position="77"/>
        <end position="180"/>
    </location>
</feature>
<feature type="compositionally biased region" description="Low complexity" evidence="2">
    <location>
        <begin position="105"/>
        <end position="129"/>
    </location>
</feature>
<dbReference type="EMBL" id="CP000115">
    <property type="protein sequence ID" value="ABA05039.1"/>
    <property type="molecule type" value="Genomic_DNA"/>
</dbReference>
<dbReference type="RefSeq" id="WP_011315035.1">
    <property type="nucleotide sequence ID" value="NC_007406.1"/>
</dbReference>
<dbReference type="SMR" id="Q3SRQ2"/>
<dbReference type="STRING" id="323098.Nwi_1778"/>
<dbReference type="KEGG" id="nwi:Nwi_1778"/>
<dbReference type="eggNOG" id="COG1826">
    <property type="taxonomic scope" value="Bacteria"/>
</dbReference>
<dbReference type="HOGENOM" id="CLU_086034_1_3_5"/>
<dbReference type="OrthoDB" id="7206969at2"/>
<dbReference type="Proteomes" id="UP000002531">
    <property type="component" value="Chromosome"/>
</dbReference>
<dbReference type="GO" id="GO:0033281">
    <property type="term" value="C:TAT protein transport complex"/>
    <property type="evidence" value="ECO:0007669"/>
    <property type="project" value="UniProtKB-UniRule"/>
</dbReference>
<dbReference type="GO" id="GO:0008320">
    <property type="term" value="F:protein transmembrane transporter activity"/>
    <property type="evidence" value="ECO:0007669"/>
    <property type="project" value="UniProtKB-UniRule"/>
</dbReference>
<dbReference type="GO" id="GO:0043953">
    <property type="term" value="P:protein transport by the Tat complex"/>
    <property type="evidence" value="ECO:0007669"/>
    <property type="project" value="UniProtKB-UniRule"/>
</dbReference>
<dbReference type="Gene3D" id="1.20.5.3310">
    <property type="match status" value="1"/>
</dbReference>
<dbReference type="HAMAP" id="MF_00237">
    <property type="entry name" value="TatB"/>
    <property type="match status" value="1"/>
</dbReference>
<dbReference type="InterPro" id="IPR003369">
    <property type="entry name" value="TatA/B/E"/>
</dbReference>
<dbReference type="InterPro" id="IPR018448">
    <property type="entry name" value="TatB"/>
</dbReference>
<dbReference type="NCBIfam" id="TIGR01410">
    <property type="entry name" value="tatB"/>
    <property type="match status" value="1"/>
</dbReference>
<dbReference type="PANTHER" id="PTHR33162">
    <property type="entry name" value="SEC-INDEPENDENT PROTEIN TRANSLOCASE PROTEIN TATA, CHLOROPLASTIC"/>
    <property type="match status" value="1"/>
</dbReference>
<dbReference type="PANTHER" id="PTHR33162:SF1">
    <property type="entry name" value="SEC-INDEPENDENT PROTEIN TRANSLOCASE PROTEIN TATA, CHLOROPLASTIC"/>
    <property type="match status" value="1"/>
</dbReference>
<dbReference type="Pfam" id="PF02416">
    <property type="entry name" value="TatA_B_E"/>
    <property type="match status" value="1"/>
</dbReference>
<dbReference type="PRINTS" id="PR01506">
    <property type="entry name" value="TATBPROTEIN"/>
</dbReference>
<keyword id="KW-0997">Cell inner membrane</keyword>
<keyword id="KW-1003">Cell membrane</keyword>
<keyword id="KW-0472">Membrane</keyword>
<keyword id="KW-0653">Protein transport</keyword>
<keyword id="KW-1185">Reference proteome</keyword>
<keyword id="KW-0811">Translocation</keyword>
<keyword id="KW-0812">Transmembrane</keyword>
<keyword id="KW-1133">Transmembrane helix</keyword>
<keyword id="KW-0813">Transport</keyword>
<accession>Q3SRQ2</accession>